<reference key="1">
    <citation type="journal article" date="1997" name="Nature">
        <title>The complete genome sequence of the Gram-positive bacterium Bacillus subtilis.</title>
        <authorList>
            <person name="Kunst F."/>
            <person name="Ogasawara N."/>
            <person name="Moszer I."/>
            <person name="Albertini A.M."/>
            <person name="Alloni G."/>
            <person name="Azevedo V."/>
            <person name="Bertero M.G."/>
            <person name="Bessieres P."/>
            <person name="Bolotin A."/>
            <person name="Borchert S."/>
            <person name="Borriss R."/>
            <person name="Boursier L."/>
            <person name="Brans A."/>
            <person name="Braun M."/>
            <person name="Brignell S.C."/>
            <person name="Bron S."/>
            <person name="Brouillet S."/>
            <person name="Bruschi C.V."/>
            <person name="Caldwell B."/>
            <person name="Capuano V."/>
            <person name="Carter N.M."/>
            <person name="Choi S.-K."/>
            <person name="Codani J.-J."/>
            <person name="Connerton I.F."/>
            <person name="Cummings N.J."/>
            <person name="Daniel R.A."/>
            <person name="Denizot F."/>
            <person name="Devine K.M."/>
            <person name="Duesterhoeft A."/>
            <person name="Ehrlich S.D."/>
            <person name="Emmerson P.T."/>
            <person name="Entian K.-D."/>
            <person name="Errington J."/>
            <person name="Fabret C."/>
            <person name="Ferrari E."/>
            <person name="Foulger D."/>
            <person name="Fritz C."/>
            <person name="Fujita M."/>
            <person name="Fujita Y."/>
            <person name="Fuma S."/>
            <person name="Galizzi A."/>
            <person name="Galleron N."/>
            <person name="Ghim S.-Y."/>
            <person name="Glaser P."/>
            <person name="Goffeau A."/>
            <person name="Golightly E.J."/>
            <person name="Grandi G."/>
            <person name="Guiseppi G."/>
            <person name="Guy B.J."/>
            <person name="Haga K."/>
            <person name="Haiech J."/>
            <person name="Harwood C.R."/>
            <person name="Henaut A."/>
            <person name="Hilbert H."/>
            <person name="Holsappel S."/>
            <person name="Hosono S."/>
            <person name="Hullo M.-F."/>
            <person name="Itaya M."/>
            <person name="Jones L.-M."/>
            <person name="Joris B."/>
            <person name="Karamata D."/>
            <person name="Kasahara Y."/>
            <person name="Klaerr-Blanchard M."/>
            <person name="Klein C."/>
            <person name="Kobayashi Y."/>
            <person name="Koetter P."/>
            <person name="Koningstein G."/>
            <person name="Krogh S."/>
            <person name="Kumano M."/>
            <person name="Kurita K."/>
            <person name="Lapidus A."/>
            <person name="Lardinois S."/>
            <person name="Lauber J."/>
            <person name="Lazarevic V."/>
            <person name="Lee S.-M."/>
            <person name="Levine A."/>
            <person name="Liu H."/>
            <person name="Masuda S."/>
            <person name="Mauel C."/>
            <person name="Medigue C."/>
            <person name="Medina N."/>
            <person name="Mellado R.P."/>
            <person name="Mizuno M."/>
            <person name="Moestl D."/>
            <person name="Nakai S."/>
            <person name="Noback M."/>
            <person name="Noone D."/>
            <person name="O'Reilly M."/>
            <person name="Ogawa K."/>
            <person name="Ogiwara A."/>
            <person name="Oudega B."/>
            <person name="Park S.-H."/>
            <person name="Parro V."/>
            <person name="Pohl T.M."/>
            <person name="Portetelle D."/>
            <person name="Porwollik S."/>
            <person name="Prescott A.M."/>
            <person name="Presecan E."/>
            <person name="Pujic P."/>
            <person name="Purnelle B."/>
            <person name="Rapoport G."/>
            <person name="Rey M."/>
            <person name="Reynolds S."/>
            <person name="Rieger M."/>
            <person name="Rivolta C."/>
            <person name="Rocha E."/>
            <person name="Roche B."/>
            <person name="Rose M."/>
            <person name="Sadaie Y."/>
            <person name="Sato T."/>
            <person name="Scanlan E."/>
            <person name="Schleich S."/>
            <person name="Schroeter R."/>
            <person name="Scoffone F."/>
            <person name="Sekiguchi J."/>
            <person name="Sekowska A."/>
            <person name="Seror S.J."/>
            <person name="Serror P."/>
            <person name="Shin B.-S."/>
            <person name="Soldo B."/>
            <person name="Sorokin A."/>
            <person name="Tacconi E."/>
            <person name="Takagi T."/>
            <person name="Takahashi H."/>
            <person name="Takemaru K."/>
            <person name="Takeuchi M."/>
            <person name="Tamakoshi A."/>
            <person name="Tanaka T."/>
            <person name="Terpstra P."/>
            <person name="Tognoni A."/>
            <person name="Tosato V."/>
            <person name="Uchiyama S."/>
            <person name="Vandenbol M."/>
            <person name="Vannier F."/>
            <person name="Vassarotti A."/>
            <person name="Viari A."/>
            <person name="Wambutt R."/>
            <person name="Wedler E."/>
            <person name="Wedler H."/>
            <person name="Weitzenegger T."/>
            <person name="Winters P."/>
            <person name="Wipat A."/>
            <person name="Yamamoto H."/>
            <person name="Yamane K."/>
            <person name="Yasumoto K."/>
            <person name="Yata K."/>
            <person name="Yoshida K."/>
            <person name="Yoshikawa H.-F."/>
            <person name="Zumstein E."/>
            <person name="Yoshikawa H."/>
            <person name="Danchin A."/>
        </authorList>
    </citation>
    <scope>NUCLEOTIDE SEQUENCE [LARGE SCALE GENOMIC DNA]</scope>
    <source>
        <strain>168</strain>
    </source>
</reference>
<name>YXZL_BACSU</name>
<feature type="chain" id="PRO_0000382681" description="Uncharacterized protein YxzL">
    <location>
        <begin position="1"/>
        <end position="54"/>
    </location>
</feature>
<feature type="region of interest" description="Disordered" evidence="1">
    <location>
        <begin position="23"/>
        <end position="54"/>
    </location>
</feature>
<feature type="compositionally biased region" description="Basic and acidic residues" evidence="1">
    <location>
        <begin position="23"/>
        <end position="35"/>
    </location>
</feature>
<feature type="compositionally biased region" description="Polar residues" evidence="1">
    <location>
        <begin position="42"/>
        <end position="54"/>
    </location>
</feature>
<dbReference type="EMBL" id="AL009126">
    <property type="protein sequence ID" value="CAX52712.1"/>
    <property type="molecule type" value="Genomic_DNA"/>
</dbReference>
<dbReference type="RefSeq" id="WP_009969160.1">
    <property type="nucleotide sequence ID" value="NZ_OZ025638.1"/>
</dbReference>
<dbReference type="RefSeq" id="YP_003097797.1">
    <property type="nucleotide sequence ID" value="NC_000964.3"/>
</dbReference>
<dbReference type="SMR" id="C0H3T6"/>
<dbReference type="PaxDb" id="224308-BSU39339"/>
<dbReference type="EnsemblBacteria" id="CAX52712">
    <property type="protein sequence ID" value="CAX52712"/>
    <property type="gene ID" value="BSU_39339"/>
</dbReference>
<dbReference type="GeneID" id="8302942"/>
<dbReference type="KEGG" id="bsu:BSU39339"/>
<dbReference type="PATRIC" id="fig|224308.179.peg.4258"/>
<dbReference type="InParanoid" id="C0H3T6"/>
<dbReference type="OrthoDB" id="9815825at2"/>
<dbReference type="BioCyc" id="BSUB:BSU39339-MONOMER"/>
<dbReference type="Proteomes" id="UP000001570">
    <property type="component" value="Chromosome"/>
</dbReference>
<proteinExistence type="predicted"/>
<organism>
    <name type="scientific">Bacillus subtilis (strain 168)</name>
    <dbReference type="NCBI Taxonomy" id="224308"/>
    <lineage>
        <taxon>Bacteria</taxon>
        <taxon>Bacillati</taxon>
        <taxon>Bacillota</taxon>
        <taxon>Bacilli</taxon>
        <taxon>Bacillales</taxon>
        <taxon>Bacillaceae</taxon>
        <taxon>Bacillus</taxon>
    </lineage>
</organism>
<protein>
    <recommendedName>
        <fullName>Uncharacterized protein YxzL</fullName>
    </recommendedName>
</protein>
<accession>C0H3T6</accession>
<gene>
    <name type="primary">yxzL</name>
    <name type="ordered locus">BSU39339</name>
</gene>
<sequence length="54" mass="6155">MAVSQLMQNLTKQLLHVRERKTDVMQEGETAKELNYEGEDMQATSSAQNRQTSV</sequence>
<evidence type="ECO:0000256" key="1">
    <source>
        <dbReference type="SAM" id="MobiDB-lite"/>
    </source>
</evidence>
<keyword id="KW-1185">Reference proteome</keyword>